<gene>
    <name type="primary">sigD</name>
    <name type="ordered locus">BQ2027_MB3448C</name>
</gene>
<organism>
    <name type="scientific">Mycobacterium bovis (strain ATCC BAA-935 / AF2122/97)</name>
    <dbReference type="NCBI Taxonomy" id="233413"/>
    <lineage>
        <taxon>Bacteria</taxon>
        <taxon>Bacillati</taxon>
        <taxon>Actinomycetota</taxon>
        <taxon>Actinomycetes</taxon>
        <taxon>Mycobacteriales</taxon>
        <taxon>Mycobacteriaceae</taxon>
        <taxon>Mycobacterium</taxon>
        <taxon>Mycobacterium tuberculosis complex</taxon>
    </lineage>
</organism>
<feature type="chain" id="PRO_0000094024" description="ECF RNA polymerase sigma factor SigD">
    <location>
        <begin position="1"/>
        <end position="212"/>
    </location>
</feature>
<feature type="DNA-binding region" description="H-T-H motif" evidence="1">
    <location>
        <begin position="176"/>
        <end position="195"/>
    </location>
</feature>
<feature type="region of interest" description="Sigma-70 factor domain-2">
    <location>
        <begin position="49"/>
        <end position="119"/>
    </location>
</feature>
<feature type="region of interest" description="Sigma-70 factor domain-4">
    <location>
        <begin position="152"/>
        <end position="201"/>
    </location>
</feature>
<feature type="short sequence motif" description="Polymerase core binding">
    <location>
        <begin position="75"/>
        <end position="78"/>
    </location>
</feature>
<keyword id="KW-0238">DNA-binding</keyword>
<keyword id="KW-1185">Reference proteome</keyword>
<keyword id="KW-0731">Sigma factor</keyword>
<keyword id="KW-0804">Transcription</keyword>
<keyword id="KW-0805">Transcription regulation</keyword>
<accession>P66812</accession>
<accession>A0A1R3Y4T8</accession>
<accession>Q50712</accession>
<accession>X2BND5</accession>
<dbReference type="EMBL" id="LT708304">
    <property type="protein sequence ID" value="SIU02076.1"/>
    <property type="molecule type" value="Genomic_DNA"/>
</dbReference>
<dbReference type="RefSeq" id="NP_857088.1">
    <property type="nucleotide sequence ID" value="NC_002945.3"/>
</dbReference>
<dbReference type="SMR" id="P66812"/>
<dbReference type="KEGG" id="mbo:BQ2027_MB3448C"/>
<dbReference type="PATRIC" id="fig|233413.5.peg.3783"/>
<dbReference type="Proteomes" id="UP000001419">
    <property type="component" value="Chromosome"/>
</dbReference>
<dbReference type="GO" id="GO:0003677">
    <property type="term" value="F:DNA binding"/>
    <property type="evidence" value="ECO:0007669"/>
    <property type="project" value="UniProtKB-KW"/>
</dbReference>
<dbReference type="GO" id="GO:0016987">
    <property type="term" value="F:sigma factor activity"/>
    <property type="evidence" value="ECO:0007669"/>
    <property type="project" value="UniProtKB-KW"/>
</dbReference>
<dbReference type="GO" id="GO:0006352">
    <property type="term" value="P:DNA-templated transcription initiation"/>
    <property type="evidence" value="ECO:0007669"/>
    <property type="project" value="InterPro"/>
</dbReference>
<dbReference type="GO" id="GO:0006950">
    <property type="term" value="P:response to stress"/>
    <property type="evidence" value="ECO:0007669"/>
    <property type="project" value="UniProtKB-ARBA"/>
</dbReference>
<dbReference type="CDD" id="cd06171">
    <property type="entry name" value="Sigma70_r4"/>
    <property type="match status" value="1"/>
</dbReference>
<dbReference type="FunFam" id="1.10.10.10:FF:000584">
    <property type="entry name" value="RNA polymerase sigma factor"/>
    <property type="match status" value="1"/>
</dbReference>
<dbReference type="FunFam" id="1.10.1740.10:FF:000022">
    <property type="entry name" value="RNA polymerase sigma factor"/>
    <property type="match status" value="1"/>
</dbReference>
<dbReference type="Gene3D" id="1.10.1740.10">
    <property type="match status" value="1"/>
</dbReference>
<dbReference type="Gene3D" id="1.10.10.10">
    <property type="entry name" value="Winged helix-like DNA-binding domain superfamily/Winged helix DNA-binding domain"/>
    <property type="match status" value="1"/>
</dbReference>
<dbReference type="InterPro" id="IPR039425">
    <property type="entry name" value="RNA_pol_sigma-70-like"/>
</dbReference>
<dbReference type="InterPro" id="IPR014284">
    <property type="entry name" value="RNA_pol_sigma-70_dom"/>
</dbReference>
<dbReference type="InterPro" id="IPR000838">
    <property type="entry name" value="RNA_pol_sigma70_ECF_CS"/>
</dbReference>
<dbReference type="InterPro" id="IPR007627">
    <property type="entry name" value="RNA_pol_sigma70_r2"/>
</dbReference>
<dbReference type="InterPro" id="IPR013249">
    <property type="entry name" value="RNA_pol_sigma70_r4_t2"/>
</dbReference>
<dbReference type="InterPro" id="IPR013325">
    <property type="entry name" value="RNA_pol_sigma_r2"/>
</dbReference>
<dbReference type="InterPro" id="IPR013324">
    <property type="entry name" value="RNA_pol_sigma_r3/r4-like"/>
</dbReference>
<dbReference type="InterPro" id="IPR036388">
    <property type="entry name" value="WH-like_DNA-bd_sf"/>
</dbReference>
<dbReference type="NCBIfam" id="NF007230">
    <property type="entry name" value="PRK09648.1"/>
    <property type="match status" value="1"/>
</dbReference>
<dbReference type="NCBIfam" id="TIGR02937">
    <property type="entry name" value="sigma70-ECF"/>
    <property type="match status" value="1"/>
</dbReference>
<dbReference type="PANTHER" id="PTHR43133:SF58">
    <property type="entry name" value="ECF RNA POLYMERASE SIGMA FACTOR SIGD"/>
    <property type="match status" value="1"/>
</dbReference>
<dbReference type="PANTHER" id="PTHR43133">
    <property type="entry name" value="RNA POLYMERASE ECF-TYPE SIGMA FACTO"/>
    <property type="match status" value="1"/>
</dbReference>
<dbReference type="Pfam" id="PF04542">
    <property type="entry name" value="Sigma70_r2"/>
    <property type="match status" value="1"/>
</dbReference>
<dbReference type="Pfam" id="PF08281">
    <property type="entry name" value="Sigma70_r4_2"/>
    <property type="match status" value="1"/>
</dbReference>
<dbReference type="SUPFAM" id="SSF88946">
    <property type="entry name" value="Sigma2 domain of RNA polymerase sigma factors"/>
    <property type="match status" value="1"/>
</dbReference>
<dbReference type="SUPFAM" id="SSF88659">
    <property type="entry name" value="Sigma3 and sigma4 domains of RNA polymerase sigma factors"/>
    <property type="match status" value="1"/>
</dbReference>
<dbReference type="PROSITE" id="PS01063">
    <property type="entry name" value="SIGMA70_ECF"/>
    <property type="match status" value="1"/>
</dbReference>
<protein>
    <recommendedName>
        <fullName>ECF RNA polymerase sigma factor SigD</fullName>
        <shortName>ECF sigma factor SigD</shortName>
    </recommendedName>
    <alternativeName>
        <fullName>Alternative RNA polymerase sigma factor SigD</fullName>
    </alternativeName>
    <alternativeName>
        <fullName>RNA polymerase sigma-D factor</fullName>
    </alternativeName>
    <alternativeName>
        <fullName>Sigma-D factor</fullName>
    </alternativeName>
</protein>
<sequence length="212" mass="22919">MVDPGVSPGCVRFVTLEISPSMTMQGERLDAVVAEAVAGDRNALREVLETIRPIVVRYCRARVGTVERSGLSADDVAQEVCLATITALPRYRDRGRPFLAFLYGIAAHKVADAHRAAGRDRAYPAETLPERWSADAGPEQMAIEADSVTRMNELLEILPAKQREILILRVVVGLSAEETAAAVGSTTGAVRVAQHRALQRLKDEIVAAGDYA</sequence>
<evidence type="ECO:0000250" key="1"/>
<evidence type="ECO:0000305" key="2"/>
<comment type="function">
    <text>Sigma factors are initiation factors that promote the attachment of RNA polymerase to specific initiation sites and are then released. Extracytoplasmic function (ECF) sigma factors are held in an inactive form by an anti-sigma factor until released by regulated intramembrane proteolysis.</text>
</comment>
<comment type="subunit">
    <text>Interacts transiently with the RNA polymerase catalytic core formed by RpoA, RpoB, RpoC and RpoZ (2 alpha, 1 beta, 1 beta' and 1 omega subunit) to form the RNA polymerase holoenzyme that can initiate transcription. Interacts (via sigma-70 factor domain 4) with RsdA.</text>
</comment>
<comment type="domain">
    <text evidence="1">The sigma-70 factor domain-2 mediates sequence-specific interaction with the -10 element in promoter DNA, and plays an important role in melting the double-stranded DNA and the formation of the transcription bubble. The sigma-70 factor domain-2 mediates interaction with the RNA polymerase subunits RpoB and RpoC (By similarity).</text>
</comment>
<comment type="domain">
    <text evidence="1">The sigma-70 factor domain-4 contains a helix-turn-helix (H-T-H) motif that mediates interaction with the -35 element in promoter DNA. The domain also mediates interaction with the RNA polymerase subunit RpoA. Interactions between sigma-70 factor domain-4 and anti-sigma factors prevents interaction of sigma factors with the RNA polymerase catalytic core (By similarity).</text>
</comment>
<comment type="miscellaneous">
    <text evidence="2">Extracytoplasmic function sigma factors (ECF) are held in an inactive form by an anti-sigma factor until released by regulated intramembrane proteolysis (RIP). RIP occurs when an extracytoplasmic signal triggers a concerted proteolytic cascade to transmit information and elicit cellular responses. The membrane-spanning anti-sigma factor is first cut extracytoplasmically (site-1 protease, S1P), then within the membrane itself (site-2 protease, S2P), while cytoplasmic proteases finish degrading the regulatory protein, liberating SigD (Probable).</text>
</comment>
<comment type="similarity">
    <text evidence="2">Belongs to the sigma-70 factor family. ECF subfamily.</text>
</comment>
<name>RPSD_MYCBO</name>
<reference key="1">
    <citation type="journal article" date="2003" name="Proc. Natl. Acad. Sci. U.S.A.">
        <title>The complete genome sequence of Mycobacterium bovis.</title>
        <authorList>
            <person name="Garnier T."/>
            <person name="Eiglmeier K."/>
            <person name="Camus J.-C."/>
            <person name="Medina N."/>
            <person name="Mansoor H."/>
            <person name="Pryor M."/>
            <person name="Duthoy S."/>
            <person name="Grondin S."/>
            <person name="Lacroix C."/>
            <person name="Monsempe C."/>
            <person name="Simon S."/>
            <person name="Harris B."/>
            <person name="Atkin R."/>
            <person name="Doggett J."/>
            <person name="Mayes R."/>
            <person name="Keating L."/>
            <person name="Wheeler P.R."/>
            <person name="Parkhill J."/>
            <person name="Barrell B.G."/>
            <person name="Cole S.T."/>
            <person name="Gordon S.V."/>
            <person name="Hewinson R.G."/>
        </authorList>
    </citation>
    <scope>NUCLEOTIDE SEQUENCE [LARGE SCALE GENOMIC DNA]</scope>
    <source>
        <strain>ATCC BAA-935 / AF2122/97</strain>
    </source>
</reference>
<reference key="2">
    <citation type="journal article" date="2017" name="Genome Announc.">
        <title>Updated reference genome sequence and annotation of Mycobacterium bovis AF2122/97.</title>
        <authorList>
            <person name="Malone K.M."/>
            <person name="Farrell D."/>
            <person name="Stuber T.P."/>
            <person name="Schubert O.T."/>
            <person name="Aebersold R."/>
            <person name="Robbe-Austerman S."/>
            <person name="Gordon S.V."/>
        </authorList>
    </citation>
    <scope>NUCLEOTIDE SEQUENCE [LARGE SCALE GENOMIC DNA]</scope>
    <scope>GENOME REANNOTATION</scope>
    <source>
        <strain>ATCC BAA-935 / AF2122/97</strain>
    </source>
</reference>
<proteinExistence type="inferred from homology"/>